<dbReference type="EC" id="3.5.1.5"/>
<dbReference type="EMBL" id="L33462">
    <property type="protein sequence ID" value="AAC41483.1"/>
    <property type="molecule type" value="Genomic_DNA"/>
</dbReference>
<dbReference type="SMR" id="P50044"/>
<dbReference type="UniPathway" id="UPA00258">
    <property type="reaction ID" value="UER00370"/>
</dbReference>
<dbReference type="GO" id="GO:0035550">
    <property type="term" value="C:urease complex"/>
    <property type="evidence" value="ECO:0007669"/>
    <property type="project" value="InterPro"/>
</dbReference>
<dbReference type="GO" id="GO:0016151">
    <property type="term" value="F:nickel cation binding"/>
    <property type="evidence" value="ECO:0007669"/>
    <property type="project" value="InterPro"/>
</dbReference>
<dbReference type="GO" id="GO:0009039">
    <property type="term" value="F:urease activity"/>
    <property type="evidence" value="ECO:0007669"/>
    <property type="project" value="UniProtKB-EC"/>
</dbReference>
<dbReference type="GO" id="GO:0043419">
    <property type="term" value="P:urea catabolic process"/>
    <property type="evidence" value="ECO:0007669"/>
    <property type="project" value="UniProtKB-UniPathway"/>
</dbReference>
<dbReference type="CDD" id="cd00407">
    <property type="entry name" value="Urease_beta"/>
    <property type="match status" value="1"/>
</dbReference>
<dbReference type="CDD" id="cd00390">
    <property type="entry name" value="Urease_gamma"/>
    <property type="match status" value="1"/>
</dbReference>
<dbReference type="FunFam" id="2.10.150.10:FF:000001">
    <property type="entry name" value="Urease subunit beta"/>
    <property type="match status" value="1"/>
</dbReference>
<dbReference type="Gene3D" id="2.10.150.10">
    <property type="entry name" value="Urease, beta subunit"/>
    <property type="match status" value="1"/>
</dbReference>
<dbReference type="Gene3D" id="3.30.280.10">
    <property type="entry name" value="Urease, gamma-like subunit"/>
    <property type="match status" value="1"/>
</dbReference>
<dbReference type="HAMAP" id="MF_01954">
    <property type="entry name" value="Urease_beta"/>
    <property type="match status" value="1"/>
</dbReference>
<dbReference type="InterPro" id="IPR002019">
    <property type="entry name" value="Urease_beta-like"/>
</dbReference>
<dbReference type="InterPro" id="IPR036461">
    <property type="entry name" value="Urease_betasu_sf"/>
</dbReference>
<dbReference type="InterPro" id="IPR008223">
    <property type="entry name" value="Urease_gamma-beta_su"/>
</dbReference>
<dbReference type="InterPro" id="IPR002026">
    <property type="entry name" value="Urease_gamma/gamma-beta_su"/>
</dbReference>
<dbReference type="InterPro" id="IPR036463">
    <property type="entry name" value="Urease_gamma_sf"/>
</dbReference>
<dbReference type="InterPro" id="IPR050069">
    <property type="entry name" value="Urease_subunit"/>
</dbReference>
<dbReference type="NCBIfam" id="NF009671">
    <property type="entry name" value="PRK13192.1"/>
    <property type="match status" value="1"/>
</dbReference>
<dbReference type="NCBIfam" id="NF009682">
    <property type="entry name" value="PRK13203.1"/>
    <property type="match status" value="1"/>
</dbReference>
<dbReference type="NCBIfam" id="NF009712">
    <property type="entry name" value="PRK13241.1"/>
    <property type="match status" value="1"/>
</dbReference>
<dbReference type="NCBIfam" id="NF010592">
    <property type="entry name" value="PRK13986.1"/>
    <property type="match status" value="1"/>
</dbReference>
<dbReference type="NCBIfam" id="TIGR00192">
    <property type="entry name" value="urease_beta"/>
    <property type="match status" value="1"/>
</dbReference>
<dbReference type="NCBIfam" id="TIGR00193">
    <property type="entry name" value="urease_gam"/>
    <property type="match status" value="1"/>
</dbReference>
<dbReference type="PANTHER" id="PTHR33569">
    <property type="entry name" value="UREASE"/>
    <property type="match status" value="1"/>
</dbReference>
<dbReference type="PANTHER" id="PTHR33569:SF1">
    <property type="entry name" value="UREASE"/>
    <property type="match status" value="1"/>
</dbReference>
<dbReference type="Pfam" id="PF00699">
    <property type="entry name" value="Urease_beta"/>
    <property type="match status" value="1"/>
</dbReference>
<dbReference type="Pfam" id="PF00547">
    <property type="entry name" value="Urease_gamma"/>
    <property type="match status" value="1"/>
</dbReference>
<dbReference type="PIRSF" id="PIRSF001225">
    <property type="entry name" value="Urease_gammabeta"/>
    <property type="match status" value="1"/>
</dbReference>
<dbReference type="SUPFAM" id="SSF51278">
    <property type="entry name" value="Urease, beta-subunit"/>
    <property type="match status" value="1"/>
</dbReference>
<dbReference type="SUPFAM" id="SSF54111">
    <property type="entry name" value="Urease, gamma-subunit"/>
    <property type="match status" value="1"/>
</dbReference>
<evidence type="ECO:0000250" key="1"/>
<evidence type="ECO:0000305" key="2"/>
<accession>P50044</accession>
<gene>
    <name type="primary">ureA</name>
</gene>
<reference key="1">
    <citation type="journal article" date="1995" name="Infect. Immun.">
        <title>Construction and characterization of an isogenic urease-negative mutant of Helicobacter mustelae.</title>
        <authorList>
            <person name="Solnick J.V."/>
            <person name="Josenhans C."/>
            <person name="Tompkins L.S."/>
            <person name="Labigne A."/>
        </authorList>
    </citation>
    <scope>NUCLEOTIDE SEQUENCE [GENOMIC DNA]</scope>
    <source>
        <strain>NCTC 12032</strain>
    </source>
</reference>
<organism>
    <name type="scientific">Helicobacter mustelae</name>
    <dbReference type="NCBI Taxonomy" id="217"/>
    <lineage>
        <taxon>Bacteria</taxon>
        <taxon>Pseudomonadati</taxon>
        <taxon>Campylobacterota</taxon>
        <taxon>Epsilonproteobacteria</taxon>
        <taxon>Campylobacterales</taxon>
        <taxon>Helicobacteraceae</taxon>
        <taxon>Helicobacter</taxon>
    </lineage>
</organism>
<keyword id="KW-0963">Cytoplasm</keyword>
<keyword id="KW-0378">Hydrolase</keyword>
<proteinExistence type="inferred from homology"/>
<name>URE23_HELMU</name>
<sequence length="213" mass="23794">LHYAGELAKKRKERGVKLNYVEAVALISMEIMEHAREGKKTVADLMSLGRQVLKAEDVMDGVAALVHEVQIEVCFPDGTLLVTVHNPIENNGKLHPGEFILKDEDIVLNAGKEAIEVKVSNKGDRPIQVGSHFHFFETNKLLEFDREKRYGRRLDIASGTSVRFEPGESKTVRLIQFGGNQRIFGFNDLNNGQVNEDNKRKALAAAKAKGFIK</sequence>
<protein>
    <recommendedName>
        <fullName>Urease subunit alpha</fullName>
        <ecNumber>3.5.1.5</ecNumber>
    </recommendedName>
    <alternativeName>
        <fullName>Urea amidohydrolase subunit alpha</fullName>
    </alternativeName>
</protein>
<feature type="chain" id="PRO_0000098073" description="Urease subunit alpha">
    <location>
        <begin position="1" status="less than"/>
        <end position="213"/>
    </location>
</feature>
<feature type="region of interest" description="Urease gamma">
    <location>
        <begin position="1" status="less than"/>
        <end position="90"/>
    </location>
</feature>
<feature type="region of interest" description="Urease beta">
    <location>
        <begin position="91"/>
        <end position="213"/>
    </location>
</feature>
<feature type="non-terminal residue">
    <location>
        <position position="1"/>
    </location>
</feature>
<comment type="catalytic activity">
    <reaction>
        <text>urea + 2 H2O + H(+) = hydrogencarbonate + 2 NH4(+)</text>
        <dbReference type="Rhea" id="RHEA:20557"/>
        <dbReference type="ChEBI" id="CHEBI:15377"/>
        <dbReference type="ChEBI" id="CHEBI:15378"/>
        <dbReference type="ChEBI" id="CHEBI:16199"/>
        <dbReference type="ChEBI" id="CHEBI:17544"/>
        <dbReference type="ChEBI" id="CHEBI:28938"/>
        <dbReference type="EC" id="3.5.1.5"/>
    </reaction>
</comment>
<comment type="pathway">
    <text>Nitrogen metabolism; urea degradation; CO(2) and NH(3) from urea (urease route): step 1/1.</text>
</comment>
<comment type="subunit">
    <text evidence="1">Heterohexamer of 3 UreA (alpha) and 3 UreB (beta) subunits.</text>
</comment>
<comment type="subcellular location">
    <subcellularLocation>
        <location evidence="1">Cytoplasm</location>
    </subcellularLocation>
</comment>
<comment type="similarity">
    <text evidence="2">In the N-terminal section; belongs to the urease gamma subunit family.</text>
</comment>
<comment type="similarity">
    <text evidence="2">In the C-terminal section; belongs to the urease beta subunit family.</text>
</comment>
<comment type="caution">
    <text evidence="2">The orthologous protein is known as the gamma/beta subunit (UreAB) in most other bacteria.</text>
</comment>